<proteinExistence type="inferred from homology"/>
<reference key="1">
    <citation type="journal article" date="2009" name="J. Bacteriol.">
        <title>Complete genome sequence and comparative genome analysis of enteropathogenic Escherichia coli O127:H6 strain E2348/69.</title>
        <authorList>
            <person name="Iguchi A."/>
            <person name="Thomson N.R."/>
            <person name="Ogura Y."/>
            <person name="Saunders D."/>
            <person name="Ooka T."/>
            <person name="Henderson I.R."/>
            <person name="Harris D."/>
            <person name="Asadulghani M."/>
            <person name="Kurokawa K."/>
            <person name="Dean P."/>
            <person name="Kenny B."/>
            <person name="Quail M.A."/>
            <person name="Thurston S."/>
            <person name="Dougan G."/>
            <person name="Hayashi T."/>
            <person name="Parkhill J."/>
            <person name="Frankel G."/>
        </authorList>
    </citation>
    <scope>NUCLEOTIDE SEQUENCE [LARGE SCALE GENOMIC DNA]</scope>
    <source>
        <strain>E2348/69 / EPEC</strain>
    </source>
</reference>
<sequence>MDNFLALTLTGKKPVITEREINGVRWRWLGDGVLELTPLTPPQGALVISAGIHGNETAPVEMLDALLGAISHGEIPLRWRLLVILGNPPALKQGKRYCHSDMNRMFGGRWQLFAESGETCRARELEQCLEDFYDQGKESVRWHLDLHTAIRGSLHPQFGVLPQRDIPWDEKFLTWLGAAGLEALVFHQEPGGTFTHFSARHFGALACTLELGKALPFGQNDLRQFAVTASAIAALLSGESVGIVRTPPLRYRVVSQITRHSPSFEMHMANDTLNFMPFEKGTLLAQDGEERFTVTHDVEYVLFPNPLVALGLRAGLMLEKIS</sequence>
<comment type="function">
    <text evidence="1">Transforms N(2)-succinylglutamate into succinate and glutamate.</text>
</comment>
<comment type="catalytic activity">
    <reaction evidence="1">
        <text>N-succinyl-L-glutamate + H2O = L-glutamate + succinate</text>
        <dbReference type="Rhea" id="RHEA:15169"/>
        <dbReference type="ChEBI" id="CHEBI:15377"/>
        <dbReference type="ChEBI" id="CHEBI:29985"/>
        <dbReference type="ChEBI" id="CHEBI:30031"/>
        <dbReference type="ChEBI" id="CHEBI:58763"/>
        <dbReference type="EC" id="3.5.1.96"/>
    </reaction>
</comment>
<comment type="cofactor">
    <cofactor evidence="1">
        <name>Zn(2+)</name>
        <dbReference type="ChEBI" id="CHEBI:29105"/>
    </cofactor>
    <text evidence="1">Binds 1 zinc ion per subunit.</text>
</comment>
<comment type="pathway">
    <text evidence="1">Amino-acid degradation; L-arginine degradation via AST pathway; L-glutamate and succinate from L-arginine: step 5/5.</text>
</comment>
<comment type="similarity">
    <text evidence="1">Belongs to the AspA/AstE family. Succinylglutamate desuccinylase subfamily.</text>
</comment>
<accession>B7USC5</accession>
<dbReference type="EC" id="3.5.1.96" evidence="1"/>
<dbReference type="EMBL" id="FM180568">
    <property type="protein sequence ID" value="CAS09420.1"/>
    <property type="molecule type" value="Genomic_DNA"/>
</dbReference>
<dbReference type="RefSeq" id="WP_000368502.1">
    <property type="nucleotide sequence ID" value="NC_011601.1"/>
</dbReference>
<dbReference type="SMR" id="B7USC5"/>
<dbReference type="KEGG" id="ecg:E2348C_1872"/>
<dbReference type="HOGENOM" id="CLU_071608_0_0_6"/>
<dbReference type="UniPathway" id="UPA00185">
    <property type="reaction ID" value="UER00283"/>
</dbReference>
<dbReference type="Proteomes" id="UP000008205">
    <property type="component" value="Chromosome"/>
</dbReference>
<dbReference type="GO" id="GO:0016788">
    <property type="term" value="F:hydrolase activity, acting on ester bonds"/>
    <property type="evidence" value="ECO:0007669"/>
    <property type="project" value="UniProtKB-UniRule"/>
</dbReference>
<dbReference type="GO" id="GO:0009017">
    <property type="term" value="F:succinylglutamate desuccinylase activity"/>
    <property type="evidence" value="ECO:0007669"/>
    <property type="project" value="UniProtKB-EC"/>
</dbReference>
<dbReference type="GO" id="GO:0008270">
    <property type="term" value="F:zinc ion binding"/>
    <property type="evidence" value="ECO:0007669"/>
    <property type="project" value="UniProtKB-UniRule"/>
</dbReference>
<dbReference type="GO" id="GO:0019544">
    <property type="term" value="P:arginine catabolic process to glutamate"/>
    <property type="evidence" value="ECO:0007669"/>
    <property type="project" value="UniProtKB-UniRule"/>
</dbReference>
<dbReference type="GO" id="GO:0019545">
    <property type="term" value="P:arginine catabolic process to succinate"/>
    <property type="evidence" value="ECO:0007669"/>
    <property type="project" value="UniProtKB-UniRule"/>
</dbReference>
<dbReference type="CDD" id="cd03855">
    <property type="entry name" value="M14_ASTE"/>
    <property type="match status" value="1"/>
</dbReference>
<dbReference type="FunFam" id="3.40.630.10:FF:000017">
    <property type="entry name" value="Succinylglutamate desuccinylase"/>
    <property type="match status" value="1"/>
</dbReference>
<dbReference type="Gene3D" id="3.40.630.10">
    <property type="entry name" value="Zn peptidases"/>
    <property type="match status" value="1"/>
</dbReference>
<dbReference type="HAMAP" id="MF_00767">
    <property type="entry name" value="Arg_catab_AstE"/>
    <property type="match status" value="1"/>
</dbReference>
<dbReference type="InterPro" id="IPR050178">
    <property type="entry name" value="AspA/AstE_fam"/>
</dbReference>
<dbReference type="InterPro" id="IPR055438">
    <property type="entry name" value="AstE_AspA_cat"/>
</dbReference>
<dbReference type="InterPro" id="IPR007036">
    <property type="entry name" value="Aste_AspA_hybrid_dom"/>
</dbReference>
<dbReference type="InterPro" id="IPR016681">
    <property type="entry name" value="SuccinylGlu_desuccinylase"/>
</dbReference>
<dbReference type="NCBIfam" id="TIGR03242">
    <property type="entry name" value="arg_catab_astE"/>
    <property type="match status" value="1"/>
</dbReference>
<dbReference type="NCBIfam" id="NF003706">
    <property type="entry name" value="PRK05324.1"/>
    <property type="match status" value="1"/>
</dbReference>
<dbReference type="PANTHER" id="PTHR15162">
    <property type="entry name" value="ASPARTOACYLASE"/>
    <property type="match status" value="1"/>
</dbReference>
<dbReference type="PANTHER" id="PTHR15162:SF7">
    <property type="entry name" value="SUCCINYLGLUTAMATE DESUCCINYLASE"/>
    <property type="match status" value="1"/>
</dbReference>
<dbReference type="Pfam" id="PF24827">
    <property type="entry name" value="AstE_AspA_cat"/>
    <property type="match status" value="1"/>
</dbReference>
<dbReference type="Pfam" id="PF04952">
    <property type="entry name" value="AstE_AspA_hybrid"/>
    <property type="match status" value="1"/>
</dbReference>
<dbReference type="PIRSF" id="PIRSF017020">
    <property type="entry name" value="AstE"/>
    <property type="match status" value="1"/>
</dbReference>
<dbReference type="SUPFAM" id="SSF53187">
    <property type="entry name" value="Zn-dependent exopeptidases"/>
    <property type="match status" value="1"/>
</dbReference>
<feature type="chain" id="PRO_1000148438" description="Succinylglutamate desuccinylase">
    <location>
        <begin position="1"/>
        <end position="322"/>
    </location>
</feature>
<feature type="active site" evidence="1">
    <location>
        <position position="210"/>
    </location>
</feature>
<feature type="binding site" evidence="1">
    <location>
        <position position="53"/>
    </location>
    <ligand>
        <name>Zn(2+)</name>
        <dbReference type="ChEBI" id="CHEBI:29105"/>
    </ligand>
</feature>
<feature type="binding site" evidence="1">
    <location>
        <position position="56"/>
    </location>
    <ligand>
        <name>Zn(2+)</name>
        <dbReference type="ChEBI" id="CHEBI:29105"/>
    </ligand>
</feature>
<feature type="binding site" evidence="1">
    <location>
        <position position="147"/>
    </location>
    <ligand>
        <name>Zn(2+)</name>
        <dbReference type="ChEBI" id="CHEBI:29105"/>
    </ligand>
</feature>
<gene>
    <name evidence="1" type="primary">astE</name>
    <name type="ordered locus">E2348C_1872</name>
</gene>
<organism>
    <name type="scientific">Escherichia coli O127:H6 (strain E2348/69 / EPEC)</name>
    <dbReference type="NCBI Taxonomy" id="574521"/>
    <lineage>
        <taxon>Bacteria</taxon>
        <taxon>Pseudomonadati</taxon>
        <taxon>Pseudomonadota</taxon>
        <taxon>Gammaproteobacteria</taxon>
        <taxon>Enterobacterales</taxon>
        <taxon>Enterobacteriaceae</taxon>
        <taxon>Escherichia</taxon>
    </lineage>
</organism>
<evidence type="ECO:0000255" key="1">
    <source>
        <dbReference type="HAMAP-Rule" id="MF_00767"/>
    </source>
</evidence>
<protein>
    <recommendedName>
        <fullName evidence="1">Succinylglutamate desuccinylase</fullName>
        <ecNumber evidence="1">3.5.1.96</ecNumber>
    </recommendedName>
</protein>
<name>ASTE_ECO27</name>
<keyword id="KW-0056">Arginine metabolism</keyword>
<keyword id="KW-0378">Hydrolase</keyword>
<keyword id="KW-0479">Metal-binding</keyword>
<keyword id="KW-1185">Reference proteome</keyword>
<keyword id="KW-0862">Zinc</keyword>